<sequence length="102" mass="11229">MKIIREAMAGTLESSDVMVRIAPAEGPEHDLLIASSVEKQFGEAIRQTLLQVLQHYQVEPVQVMVDDKGALDCVLRARLETALMRACDNGQLPWGAPNENAE</sequence>
<comment type="function">
    <text evidence="1">Covalent carrier of the coenzyme of citrate lyase.</text>
</comment>
<comment type="subunit">
    <text evidence="1">Oligomer with a subunit composition of (alpha,beta,gamma)6.</text>
</comment>
<comment type="subcellular location">
    <subcellularLocation>
        <location evidence="1">Cytoplasm</location>
    </subcellularLocation>
</comment>
<comment type="similarity">
    <text evidence="1">Belongs to the CitD family.</text>
</comment>
<name>CITD_SERP5</name>
<reference key="1">
    <citation type="submission" date="2007-09" db="EMBL/GenBank/DDBJ databases">
        <title>Complete sequence of chromosome of Serratia proteamaculans 568.</title>
        <authorList>
            <consortium name="US DOE Joint Genome Institute"/>
            <person name="Copeland A."/>
            <person name="Lucas S."/>
            <person name="Lapidus A."/>
            <person name="Barry K."/>
            <person name="Glavina del Rio T."/>
            <person name="Dalin E."/>
            <person name="Tice H."/>
            <person name="Pitluck S."/>
            <person name="Chain P."/>
            <person name="Malfatti S."/>
            <person name="Shin M."/>
            <person name="Vergez L."/>
            <person name="Schmutz J."/>
            <person name="Larimer F."/>
            <person name="Land M."/>
            <person name="Hauser L."/>
            <person name="Kyrpides N."/>
            <person name="Kim E."/>
            <person name="Taghavi S."/>
            <person name="Newman L."/>
            <person name="Vangronsveld J."/>
            <person name="van der Lelie D."/>
            <person name="Richardson P."/>
        </authorList>
    </citation>
    <scope>NUCLEOTIDE SEQUENCE [LARGE SCALE GENOMIC DNA]</scope>
    <source>
        <strain>568</strain>
    </source>
</reference>
<organism>
    <name type="scientific">Serratia proteamaculans (strain 568)</name>
    <dbReference type="NCBI Taxonomy" id="399741"/>
    <lineage>
        <taxon>Bacteria</taxon>
        <taxon>Pseudomonadati</taxon>
        <taxon>Pseudomonadota</taxon>
        <taxon>Gammaproteobacteria</taxon>
        <taxon>Enterobacterales</taxon>
        <taxon>Yersiniaceae</taxon>
        <taxon>Serratia</taxon>
    </lineage>
</organism>
<evidence type="ECO:0000255" key="1">
    <source>
        <dbReference type="HAMAP-Rule" id="MF_00805"/>
    </source>
</evidence>
<feature type="chain" id="PRO_1000062275" description="Citrate lyase acyl carrier protein">
    <location>
        <begin position="1"/>
        <end position="102"/>
    </location>
</feature>
<feature type="modified residue" description="O-(phosphoribosyl dephospho-coenzyme A)serine" evidence="1">
    <location>
        <position position="14"/>
    </location>
</feature>
<dbReference type="EMBL" id="CP000826">
    <property type="protein sequence ID" value="ABV42270.1"/>
    <property type="molecule type" value="Genomic_DNA"/>
</dbReference>
<dbReference type="SMR" id="A8GGN0"/>
<dbReference type="STRING" id="399741.Spro_3170"/>
<dbReference type="KEGG" id="spe:Spro_3170"/>
<dbReference type="eggNOG" id="COG3052">
    <property type="taxonomic scope" value="Bacteria"/>
</dbReference>
<dbReference type="HOGENOM" id="CLU_158489_0_0_6"/>
<dbReference type="OrthoDB" id="9798736at2"/>
<dbReference type="GO" id="GO:0005737">
    <property type="term" value="C:cytoplasm"/>
    <property type="evidence" value="ECO:0007669"/>
    <property type="project" value="UniProtKB-SubCell"/>
</dbReference>
<dbReference type="HAMAP" id="MF_00805">
    <property type="entry name" value="CitD"/>
    <property type="match status" value="1"/>
</dbReference>
<dbReference type="InterPro" id="IPR006495">
    <property type="entry name" value="CitD"/>
</dbReference>
<dbReference type="InterPro" id="IPR023439">
    <property type="entry name" value="Mal_deCO2ase/Cit_lyase_ACP"/>
</dbReference>
<dbReference type="NCBIfam" id="TIGR01608">
    <property type="entry name" value="citD"/>
    <property type="match status" value="1"/>
</dbReference>
<dbReference type="NCBIfam" id="NF009726">
    <property type="entry name" value="PRK13253.1"/>
    <property type="match status" value="1"/>
</dbReference>
<dbReference type="Pfam" id="PF06857">
    <property type="entry name" value="ACP"/>
    <property type="match status" value="1"/>
</dbReference>
<dbReference type="PIRSF" id="PIRSF002736">
    <property type="entry name" value="Citrt_lyas_gamma"/>
    <property type="match status" value="1"/>
</dbReference>
<protein>
    <recommendedName>
        <fullName evidence="1">Citrate lyase acyl carrier protein</fullName>
    </recommendedName>
    <alternativeName>
        <fullName evidence="1">Citrate lyase gamma chain</fullName>
    </alternativeName>
</protein>
<accession>A8GGN0</accession>
<proteinExistence type="inferred from homology"/>
<gene>
    <name evidence="1" type="primary">citD</name>
    <name type="ordered locus">Spro_3170</name>
</gene>
<keyword id="KW-0963">Cytoplasm</keyword>
<keyword id="KW-0597">Phosphoprotein</keyword>